<dbReference type="EMBL" id="AE007317">
    <property type="protein sequence ID" value="AAK99683.1"/>
    <property type="molecule type" value="Genomic_DNA"/>
</dbReference>
<dbReference type="PIR" id="G97981">
    <property type="entry name" value="G97981"/>
</dbReference>
<dbReference type="RefSeq" id="NP_358473.1">
    <property type="nucleotide sequence ID" value="NC_003098.1"/>
</dbReference>
<dbReference type="RefSeq" id="WP_001051750.1">
    <property type="nucleotide sequence ID" value="NC_003098.1"/>
</dbReference>
<dbReference type="SMR" id="Q8DQ29"/>
<dbReference type="STRING" id="171101.spr0879"/>
<dbReference type="GeneID" id="93739761"/>
<dbReference type="KEGG" id="spr:spr0879"/>
<dbReference type="PATRIC" id="fig|171101.6.peg.966"/>
<dbReference type="eggNOG" id="COG0691">
    <property type="taxonomic scope" value="Bacteria"/>
</dbReference>
<dbReference type="HOGENOM" id="CLU_108953_0_0_9"/>
<dbReference type="Proteomes" id="UP000000586">
    <property type="component" value="Chromosome"/>
</dbReference>
<dbReference type="GO" id="GO:0005829">
    <property type="term" value="C:cytosol"/>
    <property type="evidence" value="ECO:0000318"/>
    <property type="project" value="GO_Central"/>
</dbReference>
<dbReference type="GO" id="GO:0003723">
    <property type="term" value="F:RNA binding"/>
    <property type="evidence" value="ECO:0000318"/>
    <property type="project" value="GO_Central"/>
</dbReference>
<dbReference type="GO" id="GO:0070929">
    <property type="term" value="P:trans-translation"/>
    <property type="evidence" value="ECO:0007669"/>
    <property type="project" value="UniProtKB-UniRule"/>
</dbReference>
<dbReference type="CDD" id="cd09294">
    <property type="entry name" value="SmpB"/>
    <property type="match status" value="1"/>
</dbReference>
<dbReference type="Gene3D" id="2.40.280.10">
    <property type="match status" value="1"/>
</dbReference>
<dbReference type="HAMAP" id="MF_00023">
    <property type="entry name" value="SmpB"/>
    <property type="match status" value="1"/>
</dbReference>
<dbReference type="InterPro" id="IPR023620">
    <property type="entry name" value="SmpB"/>
</dbReference>
<dbReference type="InterPro" id="IPR000037">
    <property type="entry name" value="SsrA-bd_prot"/>
</dbReference>
<dbReference type="InterPro" id="IPR020081">
    <property type="entry name" value="SsrA-bd_prot_CS"/>
</dbReference>
<dbReference type="NCBIfam" id="NF003843">
    <property type="entry name" value="PRK05422.1"/>
    <property type="match status" value="1"/>
</dbReference>
<dbReference type="NCBIfam" id="TIGR00086">
    <property type="entry name" value="smpB"/>
    <property type="match status" value="1"/>
</dbReference>
<dbReference type="PANTHER" id="PTHR30308:SF2">
    <property type="entry name" value="SSRA-BINDING PROTEIN"/>
    <property type="match status" value="1"/>
</dbReference>
<dbReference type="PANTHER" id="PTHR30308">
    <property type="entry name" value="TMRNA-BINDING COMPONENT OF TRANS-TRANSLATION TAGGING COMPLEX"/>
    <property type="match status" value="1"/>
</dbReference>
<dbReference type="Pfam" id="PF01668">
    <property type="entry name" value="SmpB"/>
    <property type="match status" value="1"/>
</dbReference>
<dbReference type="SUPFAM" id="SSF74982">
    <property type="entry name" value="Small protein B (SmpB)"/>
    <property type="match status" value="1"/>
</dbReference>
<dbReference type="PROSITE" id="PS01317">
    <property type="entry name" value="SSRP"/>
    <property type="match status" value="1"/>
</dbReference>
<name>SSRP_STRR6</name>
<feature type="chain" id="PRO_0000103042" description="SsrA-binding protein">
    <location>
        <begin position="1"/>
        <end position="155"/>
    </location>
</feature>
<keyword id="KW-0963">Cytoplasm</keyword>
<keyword id="KW-1185">Reference proteome</keyword>
<keyword id="KW-0694">RNA-binding</keyword>
<reference key="1">
    <citation type="journal article" date="2001" name="J. Bacteriol.">
        <title>Genome of the bacterium Streptococcus pneumoniae strain R6.</title>
        <authorList>
            <person name="Hoskins J."/>
            <person name="Alborn W.E. Jr."/>
            <person name="Arnold J."/>
            <person name="Blaszczak L.C."/>
            <person name="Burgett S."/>
            <person name="DeHoff B.S."/>
            <person name="Estrem S.T."/>
            <person name="Fritz L."/>
            <person name="Fu D.-J."/>
            <person name="Fuller W."/>
            <person name="Geringer C."/>
            <person name="Gilmour R."/>
            <person name="Glass J.S."/>
            <person name="Khoja H."/>
            <person name="Kraft A.R."/>
            <person name="Lagace R.E."/>
            <person name="LeBlanc D.J."/>
            <person name="Lee L.N."/>
            <person name="Lefkowitz E.J."/>
            <person name="Lu J."/>
            <person name="Matsushima P."/>
            <person name="McAhren S.M."/>
            <person name="McHenney M."/>
            <person name="McLeaster K."/>
            <person name="Mundy C.W."/>
            <person name="Nicas T.I."/>
            <person name="Norris F.H."/>
            <person name="O'Gara M."/>
            <person name="Peery R.B."/>
            <person name="Robertson G.T."/>
            <person name="Rockey P."/>
            <person name="Sun P.-M."/>
            <person name="Winkler M.E."/>
            <person name="Yang Y."/>
            <person name="Young-Bellido M."/>
            <person name="Zhao G."/>
            <person name="Zook C.A."/>
            <person name="Baltz R.H."/>
            <person name="Jaskunas S.R."/>
            <person name="Rosteck P.R. Jr."/>
            <person name="Skatrud P.L."/>
            <person name="Glass J.I."/>
        </authorList>
    </citation>
    <scope>NUCLEOTIDE SEQUENCE [LARGE SCALE GENOMIC DNA]</scope>
    <source>
        <strain>ATCC BAA-255 / R6</strain>
    </source>
</reference>
<evidence type="ECO:0000255" key="1">
    <source>
        <dbReference type="HAMAP-Rule" id="MF_00023"/>
    </source>
</evidence>
<accession>Q8DQ29</accession>
<organism>
    <name type="scientific">Streptococcus pneumoniae (strain ATCC BAA-255 / R6)</name>
    <dbReference type="NCBI Taxonomy" id="171101"/>
    <lineage>
        <taxon>Bacteria</taxon>
        <taxon>Bacillati</taxon>
        <taxon>Bacillota</taxon>
        <taxon>Bacilli</taxon>
        <taxon>Lactobacillales</taxon>
        <taxon>Streptococcaceae</taxon>
        <taxon>Streptococcus</taxon>
    </lineage>
</organism>
<proteinExistence type="inferred from homology"/>
<gene>
    <name evidence="1" type="primary">smpB</name>
    <name type="ordered locus">spr0879</name>
</gene>
<protein>
    <recommendedName>
        <fullName evidence="1">SsrA-binding protein</fullName>
    </recommendedName>
    <alternativeName>
        <fullName evidence="1">Small protein B</fullName>
    </alternativeName>
</protein>
<sequence length="155" mass="17748">MAKGEGKVVAQNKKARHDYTIVDTLEAGMVLTGTEIKSVRAARINLKDGFAQVKNGEVWLSNVHIAPYEEGNIWNQEPERRRKLLLHKKQIQKLEQETKGTGMTLVPLKVYIKDGYAKLLLGLAKGKHDYDKRESIKRREQNRDIARVMKAVNQR</sequence>
<comment type="function">
    <text evidence="1">Required for rescue of stalled ribosomes mediated by trans-translation. Binds to transfer-messenger RNA (tmRNA), required for stable association of tmRNA with ribosomes. tmRNA and SmpB together mimic tRNA shape, replacing the anticodon stem-loop with SmpB. tmRNA is encoded by the ssrA gene; the 2 termini fold to resemble tRNA(Ala) and it encodes a 'tag peptide', a short internal open reading frame. During trans-translation Ala-aminoacylated tmRNA acts like a tRNA, entering the A-site of stalled ribosomes, displacing the stalled mRNA. The ribosome then switches to translate the ORF on the tmRNA; the nascent peptide is terminated with the 'tag peptide' encoded by the tmRNA and targeted for degradation. The ribosome is freed to recommence translation, which seems to be the essential function of trans-translation.</text>
</comment>
<comment type="subcellular location">
    <subcellularLocation>
        <location evidence="1">Cytoplasm</location>
    </subcellularLocation>
    <text evidence="1">The tmRNA-SmpB complex associates with stalled 70S ribosomes.</text>
</comment>
<comment type="similarity">
    <text evidence="1">Belongs to the SmpB family.</text>
</comment>